<accession>B3E6H6</accession>
<feature type="chain" id="PRO_1000126920" description="Large ribosomal subunit protein bL9">
    <location>
        <begin position="1"/>
        <end position="147"/>
    </location>
</feature>
<sequence>MKLILKENIEHLGQIGDIVKVAPGYARNYLLPKGLAIEATEKNAKALEHAKRQLAYKKNKSLEAAKNLVAKLEALSIVLTHQAGEEGKLFGSVTNMEIAAFLKDNGLEIDRKKIVLAEPIKQLGEYSVPVKVHPEVGATLKVTVSAA</sequence>
<organism>
    <name type="scientific">Trichlorobacter lovleyi (strain ATCC BAA-1151 / DSM 17278 / SZ)</name>
    <name type="common">Geobacter lovleyi</name>
    <dbReference type="NCBI Taxonomy" id="398767"/>
    <lineage>
        <taxon>Bacteria</taxon>
        <taxon>Pseudomonadati</taxon>
        <taxon>Thermodesulfobacteriota</taxon>
        <taxon>Desulfuromonadia</taxon>
        <taxon>Geobacterales</taxon>
        <taxon>Geobacteraceae</taxon>
        <taxon>Trichlorobacter</taxon>
    </lineage>
</organism>
<proteinExistence type="inferred from homology"/>
<dbReference type="EMBL" id="CP001089">
    <property type="protein sequence ID" value="ACD96323.1"/>
    <property type="molecule type" value="Genomic_DNA"/>
</dbReference>
<dbReference type="RefSeq" id="WP_012470655.1">
    <property type="nucleotide sequence ID" value="NC_010814.1"/>
</dbReference>
<dbReference type="SMR" id="B3E6H6"/>
<dbReference type="STRING" id="398767.Glov_2610"/>
<dbReference type="KEGG" id="glo:Glov_2610"/>
<dbReference type="eggNOG" id="COG0359">
    <property type="taxonomic scope" value="Bacteria"/>
</dbReference>
<dbReference type="HOGENOM" id="CLU_078938_3_0_7"/>
<dbReference type="OrthoDB" id="9788336at2"/>
<dbReference type="Proteomes" id="UP000002420">
    <property type="component" value="Chromosome"/>
</dbReference>
<dbReference type="GO" id="GO:1990904">
    <property type="term" value="C:ribonucleoprotein complex"/>
    <property type="evidence" value="ECO:0007669"/>
    <property type="project" value="UniProtKB-KW"/>
</dbReference>
<dbReference type="GO" id="GO:0005840">
    <property type="term" value="C:ribosome"/>
    <property type="evidence" value="ECO:0007669"/>
    <property type="project" value="UniProtKB-KW"/>
</dbReference>
<dbReference type="GO" id="GO:0019843">
    <property type="term" value="F:rRNA binding"/>
    <property type="evidence" value="ECO:0007669"/>
    <property type="project" value="UniProtKB-UniRule"/>
</dbReference>
<dbReference type="GO" id="GO:0003735">
    <property type="term" value="F:structural constituent of ribosome"/>
    <property type="evidence" value="ECO:0007669"/>
    <property type="project" value="InterPro"/>
</dbReference>
<dbReference type="GO" id="GO:0006412">
    <property type="term" value="P:translation"/>
    <property type="evidence" value="ECO:0007669"/>
    <property type="project" value="UniProtKB-UniRule"/>
</dbReference>
<dbReference type="FunFam" id="3.10.430.100:FF:000006">
    <property type="entry name" value="50S ribosomal protein L9"/>
    <property type="match status" value="1"/>
</dbReference>
<dbReference type="FunFam" id="3.40.5.10:FF:000003">
    <property type="entry name" value="50S ribosomal protein L9"/>
    <property type="match status" value="1"/>
</dbReference>
<dbReference type="Gene3D" id="3.10.430.100">
    <property type="entry name" value="Ribosomal protein L9, C-terminal domain"/>
    <property type="match status" value="1"/>
</dbReference>
<dbReference type="Gene3D" id="3.40.5.10">
    <property type="entry name" value="Ribosomal protein L9, N-terminal domain"/>
    <property type="match status" value="1"/>
</dbReference>
<dbReference type="HAMAP" id="MF_00503">
    <property type="entry name" value="Ribosomal_bL9"/>
    <property type="match status" value="1"/>
</dbReference>
<dbReference type="InterPro" id="IPR000244">
    <property type="entry name" value="Ribosomal_bL9"/>
</dbReference>
<dbReference type="InterPro" id="IPR009027">
    <property type="entry name" value="Ribosomal_bL9/RNase_H1_N"/>
</dbReference>
<dbReference type="InterPro" id="IPR020594">
    <property type="entry name" value="Ribosomal_bL9_bac/chp"/>
</dbReference>
<dbReference type="InterPro" id="IPR020069">
    <property type="entry name" value="Ribosomal_bL9_C"/>
</dbReference>
<dbReference type="InterPro" id="IPR036791">
    <property type="entry name" value="Ribosomal_bL9_C_sf"/>
</dbReference>
<dbReference type="InterPro" id="IPR020070">
    <property type="entry name" value="Ribosomal_bL9_N"/>
</dbReference>
<dbReference type="InterPro" id="IPR036935">
    <property type="entry name" value="Ribosomal_bL9_N_sf"/>
</dbReference>
<dbReference type="NCBIfam" id="TIGR00158">
    <property type="entry name" value="L9"/>
    <property type="match status" value="1"/>
</dbReference>
<dbReference type="PANTHER" id="PTHR21368">
    <property type="entry name" value="50S RIBOSOMAL PROTEIN L9"/>
    <property type="match status" value="1"/>
</dbReference>
<dbReference type="Pfam" id="PF03948">
    <property type="entry name" value="Ribosomal_L9_C"/>
    <property type="match status" value="1"/>
</dbReference>
<dbReference type="Pfam" id="PF01281">
    <property type="entry name" value="Ribosomal_L9_N"/>
    <property type="match status" value="1"/>
</dbReference>
<dbReference type="SUPFAM" id="SSF55658">
    <property type="entry name" value="L9 N-domain-like"/>
    <property type="match status" value="1"/>
</dbReference>
<dbReference type="SUPFAM" id="SSF55653">
    <property type="entry name" value="Ribosomal protein L9 C-domain"/>
    <property type="match status" value="1"/>
</dbReference>
<dbReference type="PROSITE" id="PS00651">
    <property type="entry name" value="RIBOSOMAL_L9"/>
    <property type="match status" value="1"/>
</dbReference>
<protein>
    <recommendedName>
        <fullName evidence="1">Large ribosomal subunit protein bL9</fullName>
    </recommendedName>
    <alternativeName>
        <fullName evidence="2">50S ribosomal protein L9</fullName>
    </alternativeName>
</protein>
<comment type="function">
    <text evidence="1">Binds to the 23S rRNA.</text>
</comment>
<comment type="similarity">
    <text evidence="1">Belongs to the bacterial ribosomal protein bL9 family.</text>
</comment>
<reference key="1">
    <citation type="submission" date="2008-05" db="EMBL/GenBank/DDBJ databases">
        <title>Complete sequence of chromosome of Geobacter lovleyi SZ.</title>
        <authorList>
            <consortium name="US DOE Joint Genome Institute"/>
            <person name="Lucas S."/>
            <person name="Copeland A."/>
            <person name="Lapidus A."/>
            <person name="Glavina del Rio T."/>
            <person name="Dalin E."/>
            <person name="Tice H."/>
            <person name="Bruce D."/>
            <person name="Goodwin L."/>
            <person name="Pitluck S."/>
            <person name="Chertkov O."/>
            <person name="Meincke L."/>
            <person name="Brettin T."/>
            <person name="Detter J.C."/>
            <person name="Han C."/>
            <person name="Tapia R."/>
            <person name="Kuske C.R."/>
            <person name="Schmutz J."/>
            <person name="Larimer F."/>
            <person name="Land M."/>
            <person name="Hauser L."/>
            <person name="Kyrpides N."/>
            <person name="Mikhailova N."/>
            <person name="Sung Y."/>
            <person name="Fletcher K.E."/>
            <person name="Ritalahti K.M."/>
            <person name="Loeffler F.E."/>
            <person name="Richardson P."/>
        </authorList>
    </citation>
    <scope>NUCLEOTIDE SEQUENCE [LARGE SCALE GENOMIC DNA]</scope>
    <source>
        <strain>ATCC BAA-1151 / DSM 17278 / SZ</strain>
    </source>
</reference>
<evidence type="ECO:0000255" key="1">
    <source>
        <dbReference type="HAMAP-Rule" id="MF_00503"/>
    </source>
</evidence>
<evidence type="ECO:0000305" key="2"/>
<gene>
    <name evidence="1" type="primary">rplI</name>
    <name type="ordered locus">Glov_2610</name>
</gene>
<keyword id="KW-1185">Reference proteome</keyword>
<keyword id="KW-0687">Ribonucleoprotein</keyword>
<keyword id="KW-0689">Ribosomal protein</keyword>
<keyword id="KW-0694">RNA-binding</keyword>
<keyword id="KW-0699">rRNA-binding</keyword>
<name>RL9_TRIL1</name>